<reference key="1">
    <citation type="submission" date="2007-02" db="EMBL/GenBank/DDBJ databases">
        <title>Complete sequence of Pyrobaculum calidifontis JCM 11548.</title>
        <authorList>
            <consortium name="US DOE Joint Genome Institute"/>
            <person name="Copeland A."/>
            <person name="Lucas S."/>
            <person name="Lapidus A."/>
            <person name="Barry K."/>
            <person name="Glavina del Rio T."/>
            <person name="Dalin E."/>
            <person name="Tice H."/>
            <person name="Pitluck S."/>
            <person name="Chain P."/>
            <person name="Malfatti S."/>
            <person name="Shin M."/>
            <person name="Vergez L."/>
            <person name="Schmutz J."/>
            <person name="Larimer F."/>
            <person name="Land M."/>
            <person name="Hauser L."/>
            <person name="Kyrpides N."/>
            <person name="Mikhailova N."/>
            <person name="Cozen A.E."/>
            <person name="Fitz-Gibbon S.T."/>
            <person name="House C.H."/>
            <person name="Saltikov C."/>
            <person name="Lowe T.M."/>
            <person name="Richardson P."/>
        </authorList>
    </citation>
    <scope>NUCLEOTIDE SEQUENCE [LARGE SCALE GENOMIC DNA]</scope>
    <source>
        <strain>DSM 21063 / JCM 11548 / VA1</strain>
    </source>
</reference>
<reference key="2">
    <citation type="journal article" date="2015" name="J. Nutr. Sci. Vitaminol.">
        <title>Characterization of thiamin phosphate kinase in the hyperthermophilic archaeon Pyrobaculum calidifontis.</title>
        <authorList>
            <person name="Hayashi M."/>
            <person name="Nosaka K."/>
        </authorList>
    </citation>
    <scope>FUNCTION</scope>
    <scope>CATALYTIC ACTIVITY</scope>
    <scope>BIOPHYSICOCHEMICAL PROPERTIES</scope>
    <scope>ACTIVITY REGULATION</scope>
    <scope>PATHWAY</scope>
    <scope>SUBUNIT</scope>
    <scope>MUTAGENESIS OF ARG-136 AND SER-196</scope>
    <source>
        <strain>DSM 21063 / JCM 11548 / VA1</strain>
    </source>
</reference>
<name>THIL_PYRCJ</name>
<organism>
    <name type="scientific">Pyrobaculum calidifontis (strain DSM 21063 / JCM 11548 / VA1)</name>
    <dbReference type="NCBI Taxonomy" id="410359"/>
    <lineage>
        <taxon>Archaea</taxon>
        <taxon>Thermoproteota</taxon>
        <taxon>Thermoprotei</taxon>
        <taxon>Thermoproteales</taxon>
        <taxon>Thermoproteaceae</taxon>
        <taxon>Pyrobaculum</taxon>
    </lineage>
</organism>
<feature type="chain" id="PRO_0000439888" description="Thiamine-monophosphate kinase">
    <location>
        <begin position="1"/>
        <end position="293"/>
    </location>
</feature>
<feature type="binding site" evidence="1">
    <location>
        <position position="25"/>
    </location>
    <ligand>
        <name>Mg(2+)</name>
        <dbReference type="ChEBI" id="CHEBI:18420"/>
        <label>3</label>
    </ligand>
</feature>
<feature type="binding site" evidence="1">
    <location>
        <position position="25"/>
    </location>
    <ligand>
        <name>Mg(2+)</name>
        <dbReference type="ChEBI" id="CHEBI:18420"/>
        <label>4</label>
    </ligand>
</feature>
<feature type="binding site" evidence="1">
    <location>
        <position position="39"/>
    </location>
    <ligand>
        <name>Mg(2+)</name>
        <dbReference type="ChEBI" id="CHEBI:18420"/>
        <label>1</label>
    </ligand>
</feature>
<feature type="binding site" evidence="1">
    <location>
        <position position="40"/>
    </location>
    <ligand>
        <name>Mg(2+)</name>
        <dbReference type="ChEBI" id="CHEBI:18420"/>
        <label>1</label>
    </ligand>
</feature>
<feature type="binding site" evidence="1">
    <location>
        <position position="40"/>
    </location>
    <ligand>
        <name>Mg(2+)</name>
        <dbReference type="ChEBI" id="CHEBI:18420"/>
        <label>2</label>
    </ligand>
</feature>
<feature type="binding site" evidence="1">
    <location>
        <position position="68"/>
    </location>
    <ligand>
        <name>Mg(2+)</name>
        <dbReference type="ChEBI" id="CHEBI:18420"/>
        <label>2</label>
    </ligand>
</feature>
<feature type="binding site" evidence="1">
    <location>
        <position position="68"/>
    </location>
    <ligand>
        <name>Mg(2+)</name>
        <dbReference type="ChEBI" id="CHEBI:18420"/>
        <label>3</label>
    </ligand>
</feature>
<feature type="binding site" evidence="1">
    <location>
        <position position="68"/>
    </location>
    <ligand>
        <name>Mg(2+)</name>
        <dbReference type="ChEBI" id="CHEBI:18420"/>
        <label>4</label>
    </ligand>
</feature>
<feature type="binding site" evidence="1">
    <location>
        <begin position="112"/>
        <end position="113"/>
    </location>
    <ligand>
        <name>ATP</name>
        <dbReference type="ChEBI" id="CHEBI:30616"/>
    </ligand>
</feature>
<feature type="binding site" evidence="1">
    <location>
        <position position="113"/>
    </location>
    <ligand>
        <name>Mg(2+)</name>
        <dbReference type="ChEBI" id="CHEBI:18420"/>
        <label>1</label>
    </ligand>
</feature>
<feature type="binding site" evidence="1">
    <location>
        <position position="136"/>
    </location>
    <ligand>
        <name>ATP</name>
        <dbReference type="ChEBI" id="CHEBI:30616"/>
    </ligand>
</feature>
<feature type="binding site" evidence="1">
    <location>
        <position position="194"/>
    </location>
    <ligand>
        <name>Mg(2+)</name>
        <dbReference type="ChEBI" id="CHEBI:18420"/>
        <label>3</label>
    </ligand>
</feature>
<feature type="binding site" evidence="1">
    <location>
        <position position="196"/>
    </location>
    <ligand>
        <name>ATP</name>
        <dbReference type="ChEBI" id="CHEBI:30616"/>
    </ligand>
</feature>
<feature type="binding site" evidence="1">
    <location>
        <position position="197"/>
    </location>
    <ligand>
        <name>Mg(2+)</name>
        <dbReference type="ChEBI" id="CHEBI:18420"/>
        <label>5</label>
    </ligand>
</feature>
<feature type="binding site" evidence="1">
    <location>
        <position position="243"/>
    </location>
    <ligand>
        <name>substrate</name>
    </ligand>
</feature>
<feature type="binding site" evidence="1">
    <location>
        <position position="286"/>
    </location>
    <ligand>
        <name>substrate</name>
    </ligand>
</feature>
<feature type="mutagenesis site" description="7-fold decrease in affinity for ATP. 1.5-fold increase in activity." evidence="2">
    <original>R</original>
    <variation>M</variation>
    <location>
        <position position="136"/>
    </location>
</feature>
<feature type="mutagenesis site" description="90% decrease in activity. However, displays a 30-fold increase in the catalytic efficiency toward ATP due to a large increase in affinity for ATP." evidence="2">
    <original>S</original>
    <variation>A</variation>
    <location>
        <position position="196"/>
    </location>
</feature>
<gene>
    <name evidence="3" type="primary">thiL</name>
    <name evidence="4" type="ordered locus">Pcal_0657</name>
</gene>
<keyword id="KW-0067">ATP-binding</keyword>
<keyword id="KW-0418">Kinase</keyword>
<keyword id="KW-0460">Magnesium</keyword>
<keyword id="KW-0479">Metal-binding</keyword>
<keyword id="KW-0547">Nucleotide-binding</keyword>
<keyword id="KW-0784">Thiamine biosynthesis</keyword>
<keyword id="KW-0808">Transferase</keyword>
<sequence length="293" mass="32000">MSGFGGRGVDEKGFLRWLLGELGVEEDDVAYVDGLVVKVDGAAASTSRLPFQTWADFGWRNVAAAYSDVRVKFAEARLLLASVTAPDLGTAAEVVQGVREASQFFSLAYVGGDLNEGRDVVVDVVLVGWARARVGRAPRPGDVLVTIPQFGYTSLAYRFWQMGGAVVERGVEALKRPKPLWPLPPAECVTAAMDSSDGLGDVLWSMARGVDIVVKELPAPREVLEFAAERGLDVGEIVFNGGEEFLPVFAVRRDCPVESPYVSFAEVVPGEGRVWWRGEELKWRGWAYFRGWG</sequence>
<accession>A3MTW6</accession>
<proteinExistence type="evidence at protein level"/>
<dbReference type="EC" id="2.7.4.16" evidence="1 2"/>
<dbReference type="EMBL" id="CP000561">
    <property type="protein sequence ID" value="ABO08083.1"/>
    <property type="molecule type" value="Genomic_DNA"/>
</dbReference>
<dbReference type="RefSeq" id="WP_011849341.1">
    <property type="nucleotide sequence ID" value="NC_009073.1"/>
</dbReference>
<dbReference type="SMR" id="A3MTW6"/>
<dbReference type="STRING" id="410359.Pcal_0657"/>
<dbReference type="GeneID" id="4909098"/>
<dbReference type="KEGG" id="pcl:Pcal_0657"/>
<dbReference type="eggNOG" id="arCOG00638">
    <property type="taxonomic scope" value="Archaea"/>
</dbReference>
<dbReference type="HOGENOM" id="CLU_046964_2_1_2"/>
<dbReference type="OrthoDB" id="45909at2157"/>
<dbReference type="BRENDA" id="2.7.4.16">
    <property type="organism ID" value="7282"/>
</dbReference>
<dbReference type="UniPathway" id="UPA00060">
    <property type="reaction ID" value="UER00142"/>
</dbReference>
<dbReference type="Proteomes" id="UP000001431">
    <property type="component" value="Chromosome"/>
</dbReference>
<dbReference type="GO" id="GO:0005524">
    <property type="term" value="F:ATP binding"/>
    <property type="evidence" value="ECO:0000314"/>
    <property type="project" value="UniProtKB"/>
</dbReference>
<dbReference type="GO" id="GO:0000287">
    <property type="term" value="F:magnesium ion binding"/>
    <property type="evidence" value="ECO:0007669"/>
    <property type="project" value="UniProtKB-UniRule"/>
</dbReference>
<dbReference type="GO" id="GO:0042803">
    <property type="term" value="F:protein homodimerization activity"/>
    <property type="evidence" value="ECO:0000314"/>
    <property type="project" value="UniProtKB"/>
</dbReference>
<dbReference type="GO" id="GO:0009030">
    <property type="term" value="F:thiamine-phosphate kinase activity"/>
    <property type="evidence" value="ECO:0000314"/>
    <property type="project" value="UniProtKB"/>
</dbReference>
<dbReference type="GO" id="GO:0009228">
    <property type="term" value="P:thiamine biosynthetic process"/>
    <property type="evidence" value="ECO:0007669"/>
    <property type="project" value="UniProtKB-KW"/>
</dbReference>
<dbReference type="GO" id="GO:0009229">
    <property type="term" value="P:thiamine diphosphate biosynthetic process"/>
    <property type="evidence" value="ECO:0000314"/>
    <property type="project" value="UniProtKB"/>
</dbReference>
<dbReference type="CDD" id="cd02194">
    <property type="entry name" value="ThiL"/>
    <property type="match status" value="1"/>
</dbReference>
<dbReference type="Gene3D" id="3.90.650.10">
    <property type="entry name" value="PurM-like C-terminal domain"/>
    <property type="match status" value="1"/>
</dbReference>
<dbReference type="Gene3D" id="3.30.1330.10">
    <property type="entry name" value="PurM-like, N-terminal domain"/>
    <property type="match status" value="1"/>
</dbReference>
<dbReference type="HAMAP" id="MF_02128">
    <property type="entry name" value="TMP_kinase"/>
    <property type="match status" value="1"/>
</dbReference>
<dbReference type="InterPro" id="IPR036676">
    <property type="entry name" value="PurM-like_C_sf"/>
</dbReference>
<dbReference type="InterPro" id="IPR016188">
    <property type="entry name" value="PurM-like_N"/>
</dbReference>
<dbReference type="InterPro" id="IPR036921">
    <property type="entry name" value="PurM-like_N_sf"/>
</dbReference>
<dbReference type="InterPro" id="IPR006283">
    <property type="entry name" value="ThiL-like"/>
</dbReference>
<dbReference type="PANTHER" id="PTHR30270">
    <property type="entry name" value="THIAMINE-MONOPHOSPHATE KINASE"/>
    <property type="match status" value="1"/>
</dbReference>
<dbReference type="PANTHER" id="PTHR30270:SF0">
    <property type="entry name" value="THIAMINE-MONOPHOSPHATE KINASE"/>
    <property type="match status" value="1"/>
</dbReference>
<dbReference type="Pfam" id="PF00586">
    <property type="entry name" value="AIRS"/>
    <property type="match status" value="1"/>
</dbReference>
<dbReference type="SUPFAM" id="SSF56042">
    <property type="entry name" value="PurM C-terminal domain-like"/>
    <property type="match status" value="1"/>
</dbReference>
<dbReference type="SUPFAM" id="SSF55326">
    <property type="entry name" value="PurM N-terminal domain-like"/>
    <property type="match status" value="1"/>
</dbReference>
<comment type="function">
    <text evidence="1 2">Catalyzes the ATP-dependent phosphorylation of thiamine-monophosphate (TMP) to form thiamine-pyrophosphate (TPP), the active form of vitamin B1.</text>
</comment>
<comment type="catalytic activity">
    <reaction evidence="1 2">
        <text>thiamine phosphate + ATP = thiamine diphosphate + ADP</text>
        <dbReference type="Rhea" id="RHEA:15913"/>
        <dbReference type="ChEBI" id="CHEBI:30616"/>
        <dbReference type="ChEBI" id="CHEBI:37575"/>
        <dbReference type="ChEBI" id="CHEBI:58937"/>
        <dbReference type="ChEBI" id="CHEBI:456216"/>
        <dbReference type="EC" id="2.7.4.16"/>
    </reaction>
</comment>
<comment type="activity regulation">
    <text evidence="2">Is inhibited by AMP; the mode of AMP inhibition is uncompetitive for both TMP and ATP.</text>
</comment>
<comment type="biophysicochemical properties">
    <kinetics>
        <KM evidence="2">0.2 uM for thiamine phosphate (at pH 7.0 and 100 degrees Celsius)</KM>
        <KM evidence="2">39 uM for ATP (at pH 7.0 and 100 degrees Celsius)</KM>
        <text evidence="2">kcat is 0.063 sec(-1) (at pH 7.0 and 100 degrees Celsius).</text>
    </kinetics>
    <phDependence>
        <text evidence="2">Optimum pH is around 7.0. Retains about 90% of maximum activity at pH 8.0.</text>
    </phDependence>
    <temperatureDependence>
        <text evidence="2">Optimum temperature is 120 degrees Celsius. Activities at 100 and 80 degrees Celsius are about 50% and 10% of that at 120 degrees Celsius, respectively. Is unstable so that the protein loses about 45% of its activity after heating for 15 minutes at 100 degrees Celsius. However, the enzyme is not so intensively inactivated in the presence of ATP.</text>
    </temperatureDependence>
</comment>
<comment type="pathway">
    <text evidence="1 2">Cofactor biosynthesis; thiamine diphosphate biosynthesis; thiamine diphosphate from thiamine phosphate: step 1/1.</text>
</comment>
<comment type="subunit">
    <text evidence="2">Homodimer.</text>
</comment>
<comment type="miscellaneous">
    <text evidence="1">Reaction mechanism of ThiL seems to utilize a direct, inline transfer of the gamma-phosphate of ATP to TMP rather than a phosphorylated enzyme intermediate.</text>
</comment>
<comment type="similarity">
    <text evidence="1">Belongs to the thiamine-monophosphate kinase family.</text>
</comment>
<evidence type="ECO:0000255" key="1">
    <source>
        <dbReference type="HAMAP-Rule" id="MF_02128"/>
    </source>
</evidence>
<evidence type="ECO:0000269" key="2">
    <source>
    </source>
</evidence>
<evidence type="ECO:0000303" key="3">
    <source>
    </source>
</evidence>
<evidence type="ECO:0000312" key="4">
    <source>
        <dbReference type="EMBL" id="ABO08083.1"/>
    </source>
</evidence>
<protein>
    <recommendedName>
        <fullName evidence="1">Thiamine-monophosphate kinase</fullName>
        <shortName evidence="1">TMP kinase</shortName>
        <shortName evidence="3">TP kinase</shortName>
        <shortName evidence="1 3">Thiamine-phosphate kinase</shortName>
        <ecNumber evidence="1 2">2.7.4.16</ecNumber>
    </recommendedName>
</protein>